<name>CH60_PEDPA</name>
<dbReference type="EC" id="5.6.1.7" evidence="1"/>
<dbReference type="EMBL" id="CP000422">
    <property type="protein sequence ID" value="ABJ67517.1"/>
    <property type="molecule type" value="Genomic_DNA"/>
</dbReference>
<dbReference type="RefSeq" id="WP_002834470.1">
    <property type="nucleotide sequence ID" value="NC_008525.1"/>
</dbReference>
<dbReference type="SMR" id="Q03H05"/>
<dbReference type="STRING" id="278197.PEPE_0421"/>
<dbReference type="GeneID" id="33062104"/>
<dbReference type="KEGG" id="ppe:PEPE_0421"/>
<dbReference type="eggNOG" id="COG0459">
    <property type="taxonomic scope" value="Bacteria"/>
</dbReference>
<dbReference type="HOGENOM" id="CLU_016503_3_0_9"/>
<dbReference type="OrthoDB" id="9766614at2"/>
<dbReference type="Proteomes" id="UP000000773">
    <property type="component" value="Chromosome"/>
</dbReference>
<dbReference type="GO" id="GO:0005737">
    <property type="term" value="C:cytoplasm"/>
    <property type="evidence" value="ECO:0007669"/>
    <property type="project" value="UniProtKB-SubCell"/>
</dbReference>
<dbReference type="GO" id="GO:0005524">
    <property type="term" value="F:ATP binding"/>
    <property type="evidence" value="ECO:0007669"/>
    <property type="project" value="UniProtKB-UniRule"/>
</dbReference>
<dbReference type="GO" id="GO:0140662">
    <property type="term" value="F:ATP-dependent protein folding chaperone"/>
    <property type="evidence" value="ECO:0007669"/>
    <property type="project" value="InterPro"/>
</dbReference>
<dbReference type="GO" id="GO:0016853">
    <property type="term" value="F:isomerase activity"/>
    <property type="evidence" value="ECO:0007669"/>
    <property type="project" value="UniProtKB-KW"/>
</dbReference>
<dbReference type="GO" id="GO:0051082">
    <property type="term" value="F:unfolded protein binding"/>
    <property type="evidence" value="ECO:0007669"/>
    <property type="project" value="UniProtKB-UniRule"/>
</dbReference>
<dbReference type="GO" id="GO:0042026">
    <property type="term" value="P:protein refolding"/>
    <property type="evidence" value="ECO:0007669"/>
    <property type="project" value="UniProtKB-UniRule"/>
</dbReference>
<dbReference type="CDD" id="cd03344">
    <property type="entry name" value="GroEL"/>
    <property type="match status" value="1"/>
</dbReference>
<dbReference type="FunFam" id="1.10.560.10:FF:000001">
    <property type="entry name" value="60 kDa chaperonin"/>
    <property type="match status" value="1"/>
</dbReference>
<dbReference type="FunFam" id="3.50.7.10:FF:000001">
    <property type="entry name" value="60 kDa chaperonin"/>
    <property type="match status" value="1"/>
</dbReference>
<dbReference type="Gene3D" id="3.50.7.10">
    <property type="entry name" value="GroEL"/>
    <property type="match status" value="1"/>
</dbReference>
<dbReference type="Gene3D" id="1.10.560.10">
    <property type="entry name" value="GroEL-like equatorial domain"/>
    <property type="match status" value="1"/>
</dbReference>
<dbReference type="Gene3D" id="3.30.260.10">
    <property type="entry name" value="TCP-1-like chaperonin intermediate domain"/>
    <property type="match status" value="1"/>
</dbReference>
<dbReference type="HAMAP" id="MF_00600">
    <property type="entry name" value="CH60"/>
    <property type="match status" value="1"/>
</dbReference>
<dbReference type="InterPro" id="IPR018370">
    <property type="entry name" value="Chaperonin_Cpn60_CS"/>
</dbReference>
<dbReference type="InterPro" id="IPR001844">
    <property type="entry name" value="Cpn60/GroEL"/>
</dbReference>
<dbReference type="InterPro" id="IPR002423">
    <property type="entry name" value="Cpn60/GroEL/TCP-1"/>
</dbReference>
<dbReference type="InterPro" id="IPR027409">
    <property type="entry name" value="GroEL-like_apical_dom_sf"/>
</dbReference>
<dbReference type="InterPro" id="IPR027413">
    <property type="entry name" value="GROEL-like_equatorial_sf"/>
</dbReference>
<dbReference type="InterPro" id="IPR027410">
    <property type="entry name" value="TCP-1-like_intermed_sf"/>
</dbReference>
<dbReference type="NCBIfam" id="TIGR02348">
    <property type="entry name" value="GroEL"/>
    <property type="match status" value="1"/>
</dbReference>
<dbReference type="NCBIfam" id="NF000592">
    <property type="entry name" value="PRK00013.1"/>
    <property type="match status" value="1"/>
</dbReference>
<dbReference type="NCBIfam" id="NF009487">
    <property type="entry name" value="PRK12849.1"/>
    <property type="match status" value="1"/>
</dbReference>
<dbReference type="NCBIfam" id="NF009488">
    <property type="entry name" value="PRK12850.1"/>
    <property type="match status" value="1"/>
</dbReference>
<dbReference type="NCBIfam" id="NF009489">
    <property type="entry name" value="PRK12851.1"/>
    <property type="match status" value="1"/>
</dbReference>
<dbReference type="PANTHER" id="PTHR45633">
    <property type="entry name" value="60 KDA HEAT SHOCK PROTEIN, MITOCHONDRIAL"/>
    <property type="match status" value="1"/>
</dbReference>
<dbReference type="Pfam" id="PF00118">
    <property type="entry name" value="Cpn60_TCP1"/>
    <property type="match status" value="1"/>
</dbReference>
<dbReference type="PRINTS" id="PR00298">
    <property type="entry name" value="CHAPERONIN60"/>
</dbReference>
<dbReference type="SUPFAM" id="SSF52029">
    <property type="entry name" value="GroEL apical domain-like"/>
    <property type="match status" value="1"/>
</dbReference>
<dbReference type="SUPFAM" id="SSF48592">
    <property type="entry name" value="GroEL equatorial domain-like"/>
    <property type="match status" value="2"/>
</dbReference>
<dbReference type="PROSITE" id="PS00296">
    <property type="entry name" value="CHAPERONINS_CPN60"/>
    <property type="match status" value="1"/>
</dbReference>
<reference key="1">
    <citation type="journal article" date="2006" name="Proc. Natl. Acad. Sci. U.S.A.">
        <title>Comparative genomics of the lactic acid bacteria.</title>
        <authorList>
            <person name="Makarova K.S."/>
            <person name="Slesarev A."/>
            <person name="Wolf Y.I."/>
            <person name="Sorokin A."/>
            <person name="Mirkin B."/>
            <person name="Koonin E.V."/>
            <person name="Pavlov A."/>
            <person name="Pavlova N."/>
            <person name="Karamychev V."/>
            <person name="Polouchine N."/>
            <person name="Shakhova V."/>
            <person name="Grigoriev I."/>
            <person name="Lou Y."/>
            <person name="Rohksar D."/>
            <person name="Lucas S."/>
            <person name="Huang K."/>
            <person name="Goodstein D.M."/>
            <person name="Hawkins T."/>
            <person name="Plengvidhya V."/>
            <person name="Welker D."/>
            <person name="Hughes J."/>
            <person name="Goh Y."/>
            <person name="Benson A."/>
            <person name="Baldwin K."/>
            <person name="Lee J.-H."/>
            <person name="Diaz-Muniz I."/>
            <person name="Dosti B."/>
            <person name="Smeianov V."/>
            <person name="Wechter W."/>
            <person name="Barabote R."/>
            <person name="Lorca G."/>
            <person name="Altermann E."/>
            <person name="Barrangou R."/>
            <person name="Ganesan B."/>
            <person name="Xie Y."/>
            <person name="Rawsthorne H."/>
            <person name="Tamir D."/>
            <person name="Parker C."/>
            <person name="Breidt F."/>
            <person name="Broadbent J.R."/>
            <person name="Hutkins R."/>
            <person name="O'Sullivan D."/>
            <person name="Steele J."/>
            <person name="Unlu G."/>
            <person name="Saier M.H. Jr."/>
            <person name="Klaenhammer T."/>
            <person name="Richardson P."/>
            <person name="Kozyavkin S."/>
            <person name="Weimer B.C."/>
            <person name="Mills D.A."/>
        </authorList>
    </citation>
    <scope>NUCLEOTIDE SEQUENCE [LARGE SCALE GENOMIC DNA]</scope>
    <source>
        <strain>ATCC 25745 / CCUG 21536 / LMG 10740 / 183-1w</strain>
    </source>
</reference>
<sequence>MAKEIKFSEDARTKMLKGVDKLADTVKSTIGPKGRNVVLEQSYGSPTITNDGVTIAKAIELEDHFENMGAKLVSEVASKTNDIAGDGTTTATVLTQAIVNEGMKNVTAGANPVGIRRGIEKATSKAVEALHKMSHEVKTKDDIAQIASISSANPEVGKLIANAMEKVGNDGVITIEESRGVDTTLDVVEGMQFDRGYMSQYMVTDNDKMEANLDNPYILITDKKIGNIQDILPVLQSVVEQSRSLLIIADDITGEALPTLVLNKMRGTFNVVAVKAPGFGDRRKEQLEDIAILTGGTVITDDLGLNLKDVTIEQLGQSNKVTVTKDDTTIVEGAGSQEQIAERVGIIKQQISETTSDFDKEKLQERLAKLSGGVAVIRVGAATETELKEKKYRIEDALNATRAAVEEGFVPGGGTALANVISDLEDVEAEGDEATGVNIVRRALEEPVRQIAENAGEEGSVIVTKLKGQKPGVGYNAANDEWVDMVEAGIVDPTKVTRSALQNAASVSALLLTTEAVVADLPEDNPAPAAPAPGMGGMM</sequence>
<protein>
    <recommendedName>
        <fullName evidence="1">Chaperonin GroEL</fullName>
        <ecNumber evidence="1">5.6.1.7</ecNumber>
    </recommendedName>
    <alternativeName>
        <fullName evidence="1">60 kDa chaperonin</fullName>
    </alternativeName>
    <alternativeName>
        <fullName evidence="1">Chaperonin-60</fullName>
        <shortName evidence="1">Cpn60</shortName>
    </alternativeName>
</protein>
<proteinExistence type="inferred from homology"/>
<gene>
    <name evidence="1" type="primary">groEL</name>
    <name evidence="1" type="synonym">groL</name>
    <name type="ordered locus">PEPE_0421</name>
</gene>
<comment type="function">
    <text evidence="1">Together with its co-chaperonin GroES, plays an essential role in assisting protein folding. The GroEL-GroES system forms a nano-cage that allows encapsulation of the non-native substrate proteins and provides a physical environment optimized to promote and accelerate protein folding.</text>
</comment>
<comment type="catalytic activity">
    <reaction evidence="1">
        <text>ATP + H2O + a folded polypeptide = ADP + phosphate + an unfolded polypeptide.</text>
        <dbReference type="EC" id="5.6.1.7"/>
    </reaction>
</comment>
<comment type="subunit">
    <text evidence="1">Forms a cylinder of 14 subunits composed of two heptameric rings stacked back-to-back. Interacts with the co-chaperonin GroES.</text>
</comment>
<comment type="subcellular location">
    <subcellularLocation>
        <location evidence="1">Cytoplasm</location>
    </subcellularLocation>
</comment>
<comment type="similarity">
    <text evidence="1">Belongs to the chaperonin (HSP60) family.</text>
</comment>
<feature type="chain" id="PRO_1000025816" description="Chaperonin GroEL">
    <location>
        <begin position="1"/>
        <end position="539"/>
    </location>
</feature>
<feature type="binding site" evidence="1">
    <location>
        <begin position="29"/>
        <end position="32"/>
    </location>
    <ligand>
        <name>ATP</name>
        <dbReference type="ChEBI" id="CHEBI:30616"/>
    </ligand>
</feature>
<feature type="binding site" evidence="1">
    <location>
        <begin position="86"/>
        <end position="90"/>
    </location>
    <ligand>
        <name>ATP</name>
        <dbReference type="ChEBI" id="CHEBI:30616"/>
    </ligand>
</feature>
<feature type="binding site" evidence="1">
    <location>
        <position position="413"/>
    </location>
    <ligand>
        <name>ATP</name>
        <dbReference type="ChEBI" id="CHEBI:30616"/>
    </ligand>
</feature>
<feature type="binding site" evidence="1">
    <location>
        <begin position="476"/>
        <end position="478"/>
    </location>
    <ligand>
        <name>ATP</name>
        <dbReference type="ChEBI" id="CHEBI:30616"/>
    </ligand>
</feature>
<feature type="binding site" evidence="1">
    <location>
        <position position="492"/>
    </location>
    <ligand>
        <name>ATP</name>
        <dbReference type="ChEBI" id="CHEBI:30616"/>
    </ligand>
</feature>
<organism>
    <name type="scientific">Pediococcus pentosaceus (strain ATCC 25745 / CCUG 21536 / LMG 10740 / 183-1w)</name>
    <dbReference type="NCBI Taxonomy" id="278197"/>
    <lineage>
        <taxon>Bacteria</taxon>
        <taxon>Bacillati</taxon>
        <taxon>Bacillota</taxon>
        <taxon>Bacilli</taxon>
        <taxon>Lactobacillales</taxon>
        <taxon>Lactobacillaceae</taxon>
        <taxon>Pediococcus</taxon>
    </lineage>
</organism>
<accession>Q03H05</accession>
<keyword id="KW-0067">ATP-binding</keyword>
<keyword id="KW-0143">Chaperone</keyword>
<keyword id="KW-0963">Cytoplasm</keyword>
<keyword id="KW-0413">Isomerase</keyword>
<keyword id="KW-0547">Nucleotide-binding</keyword>
<evidence type="ECO:0000255" key="1">
    <source>
        <dbReference type="HAMAP-Rule" id="MF_00600"/>
    </source>
</evidence>